<evidence type="ECO:0000250" key="1"/>
<evidence type="ECO:0000250" key="2">
    <source>
        <dbReference type="UniProtKB" id="P04486"/>
    </source>
</evidence>
<evidence type="ECO:0000305" key="3"/>
<reference key="1">
    <citation type="journal article" date="2000" name="J. Virol.">
        <title>The genome of a very virulent Marek's disease virus.</title>
        <authorList>
            <person name="Tulman E.R."/>
            <person name="Afonso C.L."/>
            <person name="Lu Z."/>
            <person name="Zsak L."/>
            <person name="Rock D.L."/>
            <person name="Kutish G.F."/>
        </authorList>
    </citation>
    <scope>NUCLEOTIDE SEQUENCE [LARGE SCALE GENOMIC DNA]</scope>
</reference>
<gene>
    <name type="primary">MDV061</name>
</gene>
<name>VP16_GAHVM</name>
<sequence>MEANMSFENDYYSPIQLFAEIEAYANTMDKSPDLDILRTIEEFDETLLSEIEVRTQSIPSPLVAPSVTKMSLPSPSPAPPNSLYTRLLHELDFVEGPSILARLEKINVDLFSCFPHNKHLYEHAKILSVSPSEVLEELSKNTWTYTALNLNEHGEMALPMPPTTKADLPSYVDDIQNFYLGELEAREKSYATMFYGYCRALAEYIRQSAIKDLRDARVEDKNIGACSKARQYIAERYYREAARFAKLLYVHLYLSTTRDVSQRLEASQMGRQNIFVYLKCEWLQERHFHCLFQPVIFNHGVVIVEGRVLTAPELRAQNYIRSEFGLPLIRCKLVEEPDMPLISPPPFSGDAPRASVYLLQCIRSKLEVYSLSHPPNPQLHVHKEHVHVQKLESPPNYGTTVEALLMDSSDRNSISPGDPVATTISTL</sequence>
<comment type="function">
    <text evidence="1">Transcriptional activator of immediate-early (IE) gene products (alpha genes). Acts as a key activator of lytic infection by initiating the lytic program through the assembly of the transcriptional regulatory VP16-induced complex composed of VP16 and two cellular factors, HCFC1 and POU2F1. VP16-induced complex represents a regulatory switch: when it is on, it promotes IE-gene expression and thus lytic infection, and when it is off, it limits IE-gene transcription favoring latent infection (By similarity).</text>
</comment>
<comment type="function">
    <text evidence="3">May play a role in the aggregation of tegument proteins around nucleocapsids during virus morphogenesis.</text>
</comment>
<comment type="subcellular location">
    <subcellularLocation>
        <location evidence="2">Virion tegument</location>
    </subcellularLocation>
    <subcellularLocation>
        <location evidence="2">Host nucleus</location>
    </subcellularLocation>
</comment>
<comment type="similarity">
    <text evidence="3">Belongs to the herpesviridae tegument protein VP16 protein family.</text>
</comment>
<protein>
    <recommendedName>
        <fullName>Tegument protein VP16 homolog</fullName>
    </recommendedName>
    <alternativeName>
        <fullName>Alpha trans-inducing protein</fullName>
    </alternativeName>
    <alternativeName>
        <fullName>Alpha-TIF</fullName>
    </alternativeName>
    <alternativeName>
        <fullName>ORF10 protein</fullName>
    </alternativeName>
    <alternativeName>
        <fullName>Tegument protein 10</fullName>
    </alternativeName>
</protein>
<organismHost>
    <name type="scientific">Gallus gallus</name>
    <name type="common">Chicken</name>
    <dbReference type="NCBI Taxonomy" id="9031"/>
</organismHost>
<accession>Q77MR5</accession>
<keyword id="KW-0238">DNA-binding</keyword>
<keyword id="KW-1048">Host nucleus</keyword>
<keyword id="KW-0597">Phosphoprotein</keyword>
<keyword id="KW-1185">Reference proteome</keyword>
<keyword id="KW-0804">Transcription</keyword>
<keyword id="KW-0805">Transcription regulation</keyword>
<keyword id="KW-0946">Virion</keyword>
<keyword id="KW-0920">Virion tegument</keyword>
<organism>
    <name type="scientific">Gallid herpesvirus 2 (strain Chicken/Md5/ATCC VR-987)</name>
    <name type="common">GaHV-2</name>
    <name type="synonym">Marek's disease herpesvirus type 1</name>
    <dbReference type="NCBI Taxonomy" id="10389"/>
    <lineage>
        <taxon>Viruses</taxon>
        <taxon>Duplodnaviria</taxon>
        <taxon>Heunggongvirae</taxon>
        <taxon>Peploviricota</taxon>
        <taxon>Herviviricetes</taxon>
        <taxon>Herpesvirales</taxon>
        <taxon>Orthoherpesviridae</taxon>
        <taxon>Alphaherpesvirinae</taxon>
        <taxon>Mardivirus</taxon>
        <taxon>Mardivirus gallidalpha2</taxon>
        <taxon>Gallid alphaherpesvirus 2</taxon>
    </lineage>
</organism>
<proteinExistence type="inferred from homology"/>
<feature type="chain" id="PRO_0000406497" description="Tegument protein VP16 homolog">
    <location>
        <begin position="1"/>
        <end position="427"/>
    </location>
</feature>
<dbReference type="EMBL" id="AF243438">
    <property type="protein sequence ID" value="AAG14241.1"/>
    <property type="molecule type" value="Genomic_DNA"/>
</dbReference>
<dbReference type="RefSeq" id="YP_001033977.1">
    <property type="nucleotide sequence ID" value="NC_002229.3"/>
</dbReference>
<dbReference type="SMR" id="Q77MR5"/>
<dbReference type="GeneID" id="4811522"/>
<dbReference type="KEGG" id="vg:4811522"/>
<dbReference type="Proteomes" id="UP000008072">
    <property type="component" value="Segment"/>
</dbReference>
<dbReference type="GO" id="GO:0042025">
    <property type="term" value="C:host cell nucleus"/>
    <property type="evidence" value="ECO:0007669"/>
    <property type="project" value="UniProtKB-SubCell"/>
</dbReference>
<dbReference type="GO" id="GO:0019033">
    <property type="term" value="C:viral tegument"/>
    <property type="evidence" value="ECO:0007669"/>
    <property type="project" value="UniProtKB-SubCell"/>
</dbReference>
<dbReference type="GO" id="GO:0003677">
    <property type="term" value="F:DNA binding"/>
    <property type="evidence" value="ECO:0007669"/>
    <property type="project" value="UniProtKB-KW"/>
</dbReference>
<dbReference type="GO" id="GO:0039695">
    <property type="term" value="P:DNA-templated viral transcription"/>
    <property type="evidence" value="ECO:0000250"/>
    <property type="project" value="UniProtKB"/>
</dbReference>
<dbReference type="GO" id="GO:0006355">
    <property type="term" value="P:regulation of DNA-templated transcription"/>
    <property type="evidence" value="ECO:0007669"/>
    <property type="project" value="InterPro"/>
</dbReference>
<dbReference type="FunFam" id="1.10.1290.10:FF:000001">
    <property type="entry name" value="Tegument protein VP16"/>
    <property type="match status" value="1"/>
</dbReference>
<dbReference type="Gene3D" id="1.10.1290.10">
    <property type="entry name" value="Alpha trans-inducing (Alpha-TIF)"/>
    <property type="match status" value="1"/>
</dbReference>
<dbReference type="InterPro" id="IPR003174">
    <property type="entry name" value="Alpha_TIF"/>
</dbReference>
<dbReference type="InterPro" id="IPR036538">
    <property type="entry name" value="Alpha_TIF_sf"/>
</dbReference>
<dbReference type="Pfam" id="PF02232">
    <property type="entry name" value="Alpha_TIF"/>
    <property type="match status" value="1"/>
</dbReference>
<dbReference type="SMART" id="SM00814">
    <property type="entry name" value="Alpha_TIF"/>
    <property type="match status" value="1"/>
</dbReference>
<dbReference type="SUPFAM" id="SSF56548">
    <property type="entry name" value="Conserved core of transcriptional regulatory protein vp16"/>
    <property type="match status" value="1"/>
</dbReference>